<reference key="1">
    <citation type="submission" date="2006-02" db="EMBL/GenBank/DDBJ databases">
        <title>Sus scrofa KIT gene.</title>
        <authorList>
            <person name="Okumura N."/>
        </authorList>
    </citation>
    <scope>NUCLEOTIDE SEQUENCE [MRNA]</scope>
</reference>
<dbReference type="EC" id="2.7.10.1"/>
<dbReference type="EMBL" id="AB250963">
    <property type="protein sequence ID" value="BAE79801.1"/>
    <property type="molecule type" value="mRNA"/>
</dbReference>
<dbReference type="RefSeq" id="NP_001037990.1">
    <property type="nucleotide sequence ID" value="NM_001044525.1"/>
</dbReference>
<dbReference type="SMR" id="Q2HWD6"/>
<dbReference type="FunCoup" id="Q2HWD6">
    <property type="interactions" value="518"/>
</dbReference>
<dbReference type="STRING" id="9823.ENSSSCP00000066488"/>
<dbReference type="GlyCosmos" id="Q2HWD6">
    <property type="glycosylation" value="11 sites, No reported glycans"/>
</dbReference>
<dbReference type="GlyGen" id="Q2HWD6">
    <property type="glycosylation" value="11 sites"/>
</dbReference>
<dbReference type="PaxDb" id="9823-ENSSSCP00000009430"/>
<dbReference type="PeptideAtlas" id="Q2HWD6"/>
<dbReference type="GeneID" id="396810"/>
<dbReference type="KEGG" id="ssc:396810"/>
<dbReference type="CTD" id="3815"/>
<dbReference type="eggNOG" id="KOG0200">
    <property type="taxonomic scope" value="Eukaryota"/>
</dbReference>
<dbReference type="InParanoid" id="Q2HWD6"/>
<dbReference type="OrthoDB" id="6077854at2759"/>
<dbReference type="Proteomes" id="UP000008227">
    <property type="component" value="Unplaced"/>
</dbReference>
<dbReference type="Proteomes" id="UP000314985">
    <property type="component" value="Unplaced"/>
</dbReference>
<dbReference type="Proteomes" id="UP000694570">
    <property type="component" value="Unplaced"/>
</dbReference>
<dbReference type="Proteomes" id="UP000694571">
    <property type="component" value="Unplaced"/>
</dbReference>
<dbReference type="Proteomes" id="UP000694720">
    <property type="component" value="Unplaced"/>
</dbReference>
<dbReference type="Proteomes" id="UP000694722">
    <property type="component" value="Unplaced"/>
</dbReference>
<dbReference type="Proteomes" id="UP000694723">
    <property type="component" value="Unplaced"/>
</dbReference>
<dbReference type="Proteomes" id="UP000694724">
    <property type="component" value="Unplaced"/>
</dbReference>
<dbReference type="Proteomes" id="UP000694725">
    <property type="component" value="Unplaced"/>
</dbReference>
<dbReference type="Proteomes" id="UP000694726">
    <property type="component" value="Unplaced"/>
</dbReference>
<dbReference type="Proteomes" id="UP000694727">
    <property type="component" value="Unplaced"/>
</dbReference>
<dbReference type="Proteomes" id="UP000694728">
    <property type="component" value="Unplaced"/>
</dbReference>
<dbReference type="GO" id="GO:0005886">
    <property type="term" value="C:plasma membrane"/>
    <property type="evidence" value="ECO:0000318"/>
    <property type="project" value="GO_Central"/>
</dbReference>
<dbReference type="GO" id="GO:0043235">
    <property type="term" value="C:receptor complex"/>
    <property type="evidence" value="ECO:0000318"/>
    <property type="project" value="GO_Central"/>
</dbReference>
<dbReference type="GO" id="GO:0005524">
    <property type="term" value="F:ATP binding"/>
    <property type="evidence" value="ECO:0007669"/>
    <property type="project" value="UniProtKB-KW"/>
</dbReference>
<dbReference type="GO" id="GO:0019955">
    <property type="term" value="F:cytokine binding"/>
    <property type="evidence" value="ECO:0000250"/>
    <property type="project" value="UniProtKB"/>
</dbReference>
<dbReference type="GO" id="GO:0019838">
    <property type="term" value="F:growth factor binding"/>
    <property type="evidence" value="ECO:0000318"/>
    <property type="project" value="GO_Central"/>
</dbReference>
<dbReference type="GO" id="GO:0046872">
    <property type="term" value="F:metal ion binding"/>
    <property type="evidence" value="ECO:0007669"/>
    <property type="project" value="UniProtKB-KW"/>
</dbReference>
<dbReference type="GO" id="GO:0004714">
    <property type="term" value="F:transmembrane receptor protein tyrosine kinase activity"/>
    <property type="evidence" value="ECO:0000250"/>
    <property type="project" value="UniProtKB"/>
</dbReference>
<dbReference type="GO" id="GO:0030036">
    <property type="term" value="P:actin cytoskeleton organization"/>
    <property type="evidence" value="ECO:0000250"/>
    <property type="project" value="UniProtKB"/>
</dbReference>
<dbReference type="GO" id="GO:0030183">
    <property type="term" value="P:B cell differentiation"/>
    <property type="evidence" value="ECO:0000318"/>
    <property type="project" value="GO_Central"/>
</dbReference>
<dbReference type="GO" id="GO:0060326">
    <property type="term" value="P:cell chemotaxis"/>
    <property type="evidence" value="ECO:0000250"/>
    <property type="project" value="UniProtKB"/>
</dbReference>
<dbReference type="GO" id="GO:0016477">
    <property type="term" value="P:cell migration"/>
    <property type="evidence" value="ECO:0000318"/>
    <property type="project" value="GO_Central"/>
</dbReference>
<dbReference type="GO" id="GO:0019221">
    <property type="term" value="P:cytokine-mediated signaling pathway"/>
    <property type="evidence" value="ECO:0000250"/>
    <property type="project" value="UniProtKB"/>
</dbReference>
<dbReference type="GO" id="GO:0050910">
    <property type="term" value="P:detection of mechanical stimulus involved in sensory perception of sound"/>
    <property type="evidence" value="ECO:0000250"/>
    <property type="project" value="UniProtKB"/>
</dbReference>
<dbReference type="GO" id="GO:0048565">
    <property type="term" value="P:digestive tract development"/>
    <property type="evidence" value="ECO:0000250"/>
    <property type="project" value="UniProtKB"/>
</dbReference>
<dbReference type="GO" id="GO:0035162">
    <property type="term" value="P:embryonic hemopoiesis"/>
    <property type="evidence" value="ECO:0000250"/>
    <property type="project" value="UniProtKB"/>
</dbReference>
<dbReference type="GO" id="GO:0030218">
    <property type="term" value="P:erythrocyte differentiation"/>
    <property type="evidence" value="ECO:0000250"/>
    <property type="project" value="UniProtKB"/>
</dbReference>
<dbReference type="GO" id="GO:0038162">
    <property type="term" value="P:erythropoietin-mediated signaling pathway"/>
    <property type="evidence" value="ECO:0000250"/>
    <property type="project" value="UniProtKB"/>
</dbReference>
<dbReference type="GO" id="GO:0038093">
    <property type="term" value="P:Fc receptor signaling pathway"/>
    <property type="evidence" value="ECO:0000250"/>
    <property type="project" value="UniProtKB"/>
</dbReference>
<dbReference type="GO" id="GO:0002244">
    <property type="term" value="P:hematopoietic progenitor cell differentiation"/>
    <property type="evidence" value="ECO:0000318"/>
    <property type="project" value="GO_Central"/>
</dbReference>
<dbReference type="GO" id="GO:0002327">
    <property type="term" value="P:immature B cell differentiation"/>
    <property type="evidence" value="ECO:0000250"/>
    <property type="project" value="UniProtKB"/>
</dbReference>
<dbReference type="GO" id="GO:0006954">
    <property type="term" value="P:inflammatory response"/>
    <property type="evidence" value="ECO:0000250"/>
    <property type="project" value="UniProtKB"/>
</dbReference>
<dbReference type="GO" id="GO:0038109">
    <property type="term" value="P:Kit signaling pathway"/>
    <property type="evidence" value="ECO:0000250"/>
    <property type="project" value="UniProtKB"/>
</dbReference>
<dbReference type="GO" id="GO:0030032">
    <property type="term" value="P:lamellipodium assembly"/>
    <property type="evidence" value="ECO:0000250"/>
    <property type="project" value="UniProtKB"/>
</dbReference>
<dbReference type="GO" id="GO:0043303">
    <property type="term" value="P:mast cell degranulation"/>
    <property type="evidence" value="ECO:0000250"/>
    <property type="project" value="UniProtKB"/>
</dbReference>
<dbReference type="GO" id="GO:0060374">
    <property type="term" value="P:mast cell differentiation"/>
    <property type="evidence" value="ECO:0000250"/>
    <property type="project" value="UniProtKB"/>
</dbReference>
<dbReference type="GO" id="GO:0035855">
    <property type="term" value="P:megakaryocyte development"/>
    <property type="evidence" value="ECO:0000250"/>
    <property type="project" value="UniProtKB"/>
</dbReference>
<dbReference type="GO" id="GO:0097326">
    <property type="term" value="P:melanocyte adhesion"/>
    <property type="evidence" value="ECO:0000250"/>
    <property type="project" value="UniProtKB"/>
</dbReference>
<dbReference type="GO" id="GO:0030318">
    <property type="term" value="P:melanocyte differentiation"/>
    <property type="evidence" value="ECO:0000250"/>
    <property type="project" value="UniProtKB"/>
</dbReference>
<dbReference type="GO" id="GO:0097324">
    <property type="term" value="P:melanocyte migration"/>
    <property type="evidence" value="ECO:0000250"/>
    <property type="project" value="UniProtKB"/>
</dbReference>
<dbReference type="GO" id="GO:0001541">
    <property type="term" value="P:ovarian follicle development"/>
    <property type="evidence" value="ECO:0000250"/>
    <property type="project" value="UniProtKB"/>
</dbReference>
<dbReference type="GO" id="GO:0043473">
    <property type="term" value="P:pigmentation"/>
    <property type="evidence" value="ECO:0000250"/>
    <property type="project" value="UniProtKB"/>
</dbReference>
<dbReference type="GO" id="GO:0030335">
    <property type="term" value="P:positive regulation of cell migration"/>
    <property type="evidence" value="ECO:0000318"/>
    <property type="project" value="GO_Central"/>
</dbReference>
<dbReference type="GO" id="GO:0008284">
    <property type="term" value="P:positive regulation of cell population proliferation"/>
    <property type="evidence" value="ECO:0000318"/>
    <property type="project" value="GO_Central"/>
</dbReference>
<dbReference type="GO" id="GO:0002732">
    <property type="term" value="P:positive regulation of dendritic cell cytokine production"/>
    <property type="evidence" value="ECO:0000250"/>
    <property type="project" value="UniProtKB"/>
</dbReference>
<dbReference type="GO" id="GO:0032765">
    <property type="term" value="P:positive regulation of mast cell cytokine production"/>
    <property type="evidence" value="ECO:0000250"/>
    <property type="project" value="UniProtKB"/>
</dbReference>
<dbReference type="GO" id="GO:0046427">
    <property type="term" value="P:positive regulation of receptor signaling pathway via JAK-STAT"/>
    <property type="evidence" value="ECO:0000318"/>
    <property type="project" value="GO_Central"/>
</dbReference>
<dbReference type="GO" id="GO:0008360">
    <property type="term" value="P:regulation of cell shape"/>
    <property type="evidence" value="ECO:0000250"/>
    <property type="project" value="UniProtKB"/>
</dbReference>
<dbReference type="GO" id="GO:0007283">
    <property type="term" value="P:spermatogenesis"/>
    <property type="evidence" value="ECO:0000250"/>
    <property type="project" value="UniProtKB"/>
</dbReference>
<dbReference type="GO" id="GO:0048863">
    <property type="term" value="P:stem cell differentiation"/>
    <property type="evidence" value="ECO:0000250"/>
    <property type="project" value="UniProtKB"/>
</dbReference>
<dbReference type="GO" id="GO:0030217">
    <property type="term" value="P:T cell differentiation"/>
    <property type="evidence" value="ECO:0000250"/>
    <property type="project" value="UniProtKB"/>
</dbReference>
<dbReference type="CDD" id="cd00096">
    <property type="entry name" value="Ig"/>
    <property type="match status" value="1"/>
</dbReference>
<dbReference type="CDD" id="cd05860">
    <property type="entry name" value="IgI_4_SCFR"/>
    <property type="match status" value="1"/>
</dbReference>
<dbReference type="CDD" id="cd05104">
    <property type="entry name" value="PTKc_Kit"/>
    <property type="match status" value="1"/>
</dbReference>
<dbReference type="FunFam" id="1.10.510.10:FF:000177">
    <property type="entry name" value="Mast/stem cell growth factor receptor"/>
    <property type="match status" value="1"/>
</dbReference>
<dbReference type="FunFam" id="2.60.40.10:FF:000422">
    <property type="entry name" value="Mast/stem cell growth factor receptor"/>
    <property type="match status" value="1"/>
</dbReference>
<dbReference type="FunFam" id="2.60.40.10:FF:000429">
    <property type="entry name" value="Mast/stem cell growth factor receptor"/>
    <property type="match status" value="1"/>
</dbReference>
<dbReference type="FunFam" id="2.60.40.10:FF:000469">
    <property type="entry name" value="Mast/stem cell growth factor receptor"/>
    <property type="match status" value="1"/>
</dbReference>
<dbReference type="FunFam" id="2.60.40.10:FF:000544">
    <property type="entry name" value="Mast/stem cell growth factor receptor"/>
    <property type="match status" value="1"/>
</dbReference>
<dbReference type="FunFam" id="2.60.40.10:FF:000815">
    <property type="entry name" value="Mast/stem cell growth factor receptor"/>
    <property type="match status" value="1"/>
</dbReference>
<dbReference type="FunFam" id="3.30.200.20:FF:000025">
    <property type="entry name" value="Platelet-derived growth factor receptor alpha"/>
    <property type="match status" value="1"/>
</dbReference>
<dbReference type="Gene3D" id="2.60.40.10">
    <property type="entry name" value="Immunoglobulins"/>
    <property type="match status" value="5"/>
</dbReference>
<dbReference type="Gene3D" id="3.30.200.20">
    <property type="entry name" value="Phosphorylase Kinase, domain 1"/>
    <property type="match status" value="1"/>
</dbReference>
<dbReference type="Gene3D" id="1.10.510.10">
    <property type="entry name" value="Transferase(Phosphotransferase) domain 1"/>
    <property type="match status" value="1"/>
</dbReference>
<dbReference type="InterPro" id="IPR007110">
    <property type="entry name" value="Ig-like_dom"/>
</dbReference>
<dbReference type="InterPro" id="IPR036179">
    <property type="entry name" value="Ig-like_dom_sf"/>
</dbReference>
<dbReference type="InterPro" id="IPR013783">
    <property type="entry name" value="Ig-like_fold"/>
</dbReference>
<dbReference type="InterPro" id="IPR003599">
    <property type="entry name" value="Ig_sub"/>
</dbReference>
<dbReference type="InterPro" id="IPR003598">
    <property type="entry name" value="Ig_sub2"/>
</dbReference>
<dbReference type="InterPro" id="IPR013151">
    <property type="entry name" value="Immunoglobulin_dom"/>
</dbReference>
<dbReference type="InterPro" id="IPR011009">
    <property type="entry name" value="Kinase-like_dom_sf"/>
</dbReference>
<dbReference type="InterPro" id="IPR000719">
    <property type="entry name" value="Prot_kinase_dom"/>
</dbReference>
<dbReference type="InterPro" id="IPR017441">
    <property type="entry name" value="Protein_kinase_ATP_BS"/>
</dbReference>
<dbReference type="InterPro" id="IPR050122">
    <property type="entry name" value="RTK"/>
</dbReference>
<dbReference type="InterPro" id="IPR027263">
    <property type="entry name" value="SCGF_receptor"/>
</dbReference>
<dbReference type="InterPro" id="IPR001245">
    <property type="entry name" value="Ser-Thr/Tyr_kinase_cat_dom"/>
</dbReference>
<dbReference type="InterPro" id="IPR008266">
    <property type="entry name" value="Tyr_kinase_AS"/>
</dbReference>
<dbReference type="InterPro" id="IPR020635">
    <property type="entry name" value="Tyr_kinase_cat_dom"/>
</dbReference>
<dbReference type="InterPro" id="IPR001824">
    <property type="entry name" value="Tyr_kinase_rcpt_3_CS"/>
</dbReference>
<dbReference type="PANTHER" id="PTHR24416:SF46">
    <property type="entry name" value="MAST_STEM CELL GROWTH FACTOR RECEPTOR KIT"/>
    <property type="match status" value="1"/>
</dbReference>
<dbReference type="PANTHER" id="PTHR24416">
    <property type="entry name" value="TYROSINE-PROTEIN KINASE RECEPTOR"/>
    <property type="match status" value="1"/>
</dbReference>
<dbReference type="Pfam" id="PF00047">
    <property type="entry name" value="ig"/>
    <property type="match status" value="1"/>
</dbReference>
<dbReference type="Pfam" id="PF25305">
    <property type="entry name" value="Ig_PDGFR_d4"/>
    <property type="match status" value="1"/>
</dbReference>
<dbReference type="Pfam" id="PF07714">
    <property type="entry name" value="PK_Tyr_Ser-Thr"/>
    <property type="match status" value="1"/>
</dbReference>
<dbReference type="PIRSF" id="PIRSF500951">
    <property type="entry name" value="SCGF_recepter"/>
    <property type="match status" value="1"/>
</dbReference>
<dbReference type="PIRSF" id="PIRSF000615">
    <property type="entry name" value="TyrPK_CSF1-R"/>
    <property type="match status" value="1"/>
</dbReference>
<dbReference type="SMART" id="SM00409">
    <property type="entry name" value="IG"/>
    <property type="match status" value="4"/>
</dbReference>
<dbReference type="SMART" id="SM00408">
    <property type="entry name" value="IGc2"/>
    <property type="match status" value="2"/>
</dbReference>
<dbReference type="SMART" id="SM00219">
    <property type="entry name" value="TyrKc"/>
    <property type="match status" value="1"/>
</dbReference>
<dbReference type="SUPFAM" id="SSF48726">
    <property type="entry name" value="Immunoglobulin"/>
    <property type="match status" value="4"/>
</dbReference>
<dbReference type="SUPFAM" id="SSF56112">
    <property type="entry name" value="Protein kinase-like (PK-like)"/>
    <property type="match status" value="1"/>
</dbReference>
<dbReference type="PROSITE" id="PS50835">
    <property type="entry name" value="IG_LIKE"/>
    <property type="match status" value="2"/>
</dbReference>
<dbReference type="PROSITE" id="PS00107">
    <property type="entry name" value="PROTEIN_KINASE_ATP"/>
    <property type="match status" value="1"/>
</dbReference>
<dbReference type="PROSITE" id="PS50011">
    <property type="entry name" value="PROTEIN_KINASE_DOM"/>
    <property type="match status" value="1"/>
</dbReference>
<dbReference type="PROSITE" id="PS00109">
    <property type="entry name" value="PROTEIN_KINASE_TYR"/>
    <property type="match status" value="1"/>
</dbReference>
<dbReference type="PROSITE" id="PS00240">
    <property type="entry name" value="RECEPTOR_TYR_KIN_III"/>
    <property type="match status" value="1"/>
</dbReference>
<keyword id="KW-0067">ATP-binding</keyword>
<keyword id="KW-1003">Cell membrane</keyword>
<keyword id="KW-1015">Disulfide bond</keyword>
<keyword id="KW-0325">Glycoprotein</keyword>
<keyword id="KW-0393">Immunoglobulin domain</keyword>
<keyword id="KW-0418">Kinase</keyword>
<keyword id="KW-0460">Magnesium</keyword>
<keyword id="KW-0472">Membrane</keyword>
<keyword id="KW-0479">Metal-binding</keyword>
<keyword id="KW-0547">Nucleotide-binding</keyword>
<keyword id="KW-0597">Phosphoprotein</keyword>
<keyword id="KW-0656">Proto-oncogene</keyword>
<keyword id="KW-0675">Receptor</keyword>
<keyword id="KW-1185">Reference proteome</keyword>
<keyword id="KW-0677">Repeat</keyword>
<keyword id="KW-0732">Signal</keyword>
<keyword id="KW-0808">Transferase</keyword>
<keyword id="KW-0812">Transmembrane</keyword>
<keyword id="KW-1133">Transmembrane helix</keyword>
<keyword id="KW-0829">Tyrosine-protein kinase</keyword>
<keyword id="KW-0832">Ubl conjugation</keyword>
<proteinExistence type="evidence at transcript level"/>
<gene>
    <name type="primary">KIT</name>
</gene>
<comment type="function">
    <text evidence="1">Tyrosine-protein kinase that acts as a cell-surface receptor for the cytokine KITLG/SCF and plays an essential role in the regulation of cell survival and proliferation, hematopoiesis, stem cell maintenance, gametogenesis, mast cell development, migration and function, and in melanogenesis. In response to KITLG/SCF binding, KIT can activate several signaling pathways. Phosphorylates PIK3R1, PLCG1, SH2B2/APS and CBL. Activates the AKT1 signaling pathway by phosphorylation of PIK3R1, the regulatory subunit of phosphatidylinositol 3-kinase. Activated KIT also transmits signals via GRB2 and activation of RAS, RAF1 and the MAP kinases MAPK1/ERK2 and/or MAPK3/ERK1. Promotes activation of STAT family members STAT1, STAT3, STAT5A and STAT5B. Activation of PLCG1 leads to the production of the cellular signaling molecules diacylglycerol and inositol 1,4,5-trisphosphate. KIT signaling is modulated by protein phosphatases, and by rapid internalization and degradation of the receptor. Activated KIT promotes phosphorylation of the protein phosphatases PTPN6/SHP-1 and PTPRU, and of the transcription factors STAT1, STAT3, STAT5A and STAT5B. Promotes phosphorylation of PIK3R1, CBL, CRK (isoform Crk-II), LYN, MAPK1/ERK2 and/or MAPK3/ERK1, PLCG1, SRC and SHC1 (By similarity).</text>
</comment>
<comment type="catalytic activity">
    <reaction evidence="7">
        <text>L-tyrosyl-[protein] + ATP = O-phospho-L-tyrosyl-[protein] + ADP + H(+)</text>
        <dbReference type="Rhea" id="RHEA:10596"/>
        <dbReference type="Rhea" id="RHEA-COMP:10136"/>
        <dbReference type="Rhea" id="RHEA-COMP:20101"/>
        <dbReference type="ChEBI" id="CHEBI:15378"/>
        <dbReference type="ChEBI" id="CHEBI:30616"/>
        <dbReference type="ChEBI" id="CHEBI:46858"/>
        <dbReference type="ChEBI" id="CHEBI:61978"/>
        <dbReference type="ChEBI" id="CHEBI:456216"/>
        <dbReference type="EC" id="2.7.10.1"/>
    </reaction>
</comment>
<comment type="activity regulation">
    <text evidence="1">Present in an inactive conformation in the absence of bound ligand. KITLG/SCF binding leads to dimerization and activation by autophosphorylation on tyrosine residues. Activity is down-regulated by PRKCA-mediated phosphorylation on serine residues (By similarity).</text>
</comment>
<comment type="subunit">
    <text evidence="2 3">Monomer in the absence of bound KITLG/SCF. Homodimer in the presence of bound KITLG/SCF, forming a heterotetramer with two KITLG/SCF molecules. Interacts (via phosphorylated tyrosine residues) with the adapter proteins GRB2 and GRB7 (via SH2 domain), and SH2B2/APS. Interacts (via C-terminus) with MPDZ (via the tenth PDZ domain). Interacts (via phosphorylated tyrosine residues) with PIK3R1 and PIK3 catalytic subunit. Interacts (via phosphorylated tyrosine) with CRK (isoform Crk-II), FYN, SHC1 and MATK/CHK (via SH2 domain). Interacts with LYN and FES/FPS. Interacts (via phosphorylated tyrosine residues) with the protein phosphatases PTPN6/SHP-1 (via SH2 domain), PTPN11/SHP-2 (via SH2 domain) and PTPRU. Interacts with PLCG1. Interacts with DOK1 and TEC. Interacts with IL1RAP (independent of stimulation with KITLG/SCF). A mast cell-specific KITLG/SCF-induced interleukin-33 signaling complex contains IL1RL1, IL1RAP, KIT and MYD88 (By similarity).</text>
</comment>
<comment type="subcellular location">
    <subcellularLocation>
        <location evidence="1">Cell membrane</location>
        <topology evidence="1">Single-pass type I membrane protein</topology>
    </subcellularLocation>
</comment>
<comment type="PTM">
    <text evidence="1">Ubiquitinated by SOCS6. KIT is rapidly ubiquitinated after autophosphorylation induced by KITLG/SCF binding, leading to internalization and degradation.</text>
</comment>
<comment type="PTM">
    <text evidence="1">Autophosphorylated on tyrosine residues. KITLG/SCF binding promotes autophosphorylation. Phosphorylated tyrosine residues are important for interaction with specific binding partners (By similarity).</text>
</comment>
<comment type="miscellaneous">
    <text evidence="1">Numerous proteins are phosphorylated in response to KIT signaling, but it is not evident to determine which are directly phosphorylated by KIT under in vivo conditions.</text>
</comment>
<comment type="similarity">
    <text evidence="6">Belongs to the protein kinase superfamily. Tyr protein kinase family. CSF-1/PDGF receptor subfamily.</text>
</comment>
<accession>Q2HWD6</accession>
<evidence type="ECO:0000250" key="1"/>
<evidence type="ECO:0000250" key="2">
    <source>
        <dbReference type="UniProtKB" id="P05532"/>
    </source>
</evidence>
<evidence type="ECO:0000250" key="3">
    <source>
        <dbReference type="UniProtKB" id="P10721"/>
    </source>
</evidence>
<evidence type="ECO:0000255" key="4"/>
<evidence type="ECO:0000255" key="5">
    <source>
        <dbReference type="PROSITE-ProRule" id="PRU00114"/>
    </source>
</evidence>
<evidence type="ECO:0000255" key="6">
    <source>
        <dbReference type="PROSITE-ProRule" id="PRU00159"/>
    </source>
</evidence>
<evidence type="ECO:0000255" key="7">
    <source>
        <dbReference type="PROSITE-ProRule" id="PRU10028"/>
    </source>
</evidence>
<sequence>MRGARRAWDFLFVLQLLLRVQTGSSQPSVSPEELSPPSIHPAKSELIVSAGDEIRLFCTDPGSVKWTFETLGQLSENTHAEWIVEKAEAMNTGNYTCTNEGGLSSSIYVFVRDPEKLFLVDPPLYGKEDNDALVRCPLTDPEVTNYSLTGCEGKPLPKDLTFVADPKAGITIKNVKREYHRLCLHCSANQGGKSVLSKKFTLKVRAAIRAVPVVAVSKASYLLREGEEFAVMCLIKDVSSSVDSMWIRENSQTKAQVKRNSWHQGDFNFLRQEKLTISSARVNDSGVFMCYANNTFGSANVTTTLEVVDKGFINIFPMMNTTVFVNDGEDVDLIVEYEAYPKPEHRQWIYMNRTATDKWEDYPKSENESNIRYVSELHLTRLKGTEGGTYTFLVSNADVNSSVTFNVYVNTKPEILTHDRLMNGMLQCVAAGFPEPTIDWYFCPGTEQRCSVPVGPVDVQIQNSSVSPFGKLVIHSSIDYSAFKHNGTVECRAYNDVGKSSAFFNFAFKEQIHAHTLFTPLLIGFVIAAGMMCIIVMILTYKYLQKPMYEVQWKVVEEINGNNYVYIDPTQLPYDHKWEFPRNRLSFGKTLGAGAFGKVVEATAYGLIKSDAAMTVAVKMLKPSAHLTEREALMSELKVLSYLGNHMNIVNLLGACTIGGPTLVITEYCCYGDLLNFLRRKRDSFICSKQEDHAEAALYKNLLHSKESSCSDSTNEYMDMKPGVSYVVPTKADKRRSARIGSYIERDVTPAIMEDDELALDLEDLLSFSYQVAKGMAFLASKNCIHRDLAARNILLTHGRITKICDFGLARDIKNDSNYVVKGNARLPVKWMAPESIFNCVYTFESDVWSYGIFLWELFSLGSSPYPGMPVDSKFYKMIKEGFRMLSPEHAPAEMYDIMKTCWDADPLKRPTFKQIVQLIEKQISESTNHIYSNLANCSPHRENPAVDHSVRINSVGSSASSTQPLLVHEDV</sequence>
<name>KIT_PIG</name>
<protein>
    <recommendedName>
        <fullName>Mast/stem cell growth factor receptor Kit</fullName>
        <shortName>SCFR</shortName>
        <ecNumber>2.7.10.1</ecNumber>
    </recommendedName>
    <alternativeName>
        <fullName>Proto-oncogene c-Kit</fullName>
    </alternativeName>
    <alternativeName>
        <fullName>Tyrosine-protein kinase Kit</fullName>
    </alternativeName>
    <cdAntigenName>CD117</cdAntigenName>
</protein>
<organism>
    <name type="scientific">Sus scrofa</name>
    <name type="common">Pig</name>
    <dbReference type="NCBI Taxonomy" id="9823"/>
    <lineage>
        <taxon>Eukaryota</taxon>
        <taxon>Metazoa</taxon>
        <taxon>Chordata</taxon>
        <taxon>Craniata</taxon>
        <taxon>Vertebrata</taxon>
        <taxon>Euteleostomi</taxon>
        <taxon>Mammalia</taxon>
        <taxon>Eutheria</taxon>
        <taxon>Laurasiatheria</taxon>
        <taxon>Artiodactyla</taxon>
        <taxon>Suina</taxon>
        <taxon>Suidae</taxon>
        <taxon>Sus</taxon>
    </lineage>
</organism>
<feature type="signal peptide" evidence="4">
    <location>
        <begin position="1"/>
        <end position="25"/>
    </location>
</feature>
<feature type="chain" id="PRO_0000248276" description="Mast/stem cell growth factor receptor Kit">
    <location>
        <begin position="26"/>
        <end position="972"/>
    </location>
</feature>
<feature type="topological domain" description="Extracellular" evidence="4">
    <location>
        <begin position="26"/>
        <end position="520"/>
    </location>
</feature>
<feature type="transmembrane region" description="Helical" evidence="4">
    <location>
        <begin position="521"/>
        <end position="541"/>
    </location>
</feature>
<feature type="topological domain" description="Cytoplasmic" evidence="4">
    <location>
        <begin position="542"/>
        <end position="972"/>
    </location>
</feature>
<feature type="domain" description="Ig-like C2-type 1">
    <location>
        <begin position="27"/>
        <end position="112"/>
    </location>
</feature>
<feature type="domain" description="Ig-like C2-type 2">
    <location>
        <begin position="121"/>
        <end position="205"/>
    </location>
</feature>
<feature type="domain" description="Ig-like C2-type 3">
    <location>
        <begin position="212"/>
        <end position="308"/>
    </location>
</feature>
<feature type="domain" description="Ig-like C2-type 4">
    <location>
        <begin position="317"/>
        <end position="410"/>
    </location>
</feature>
<feature type="domain" description="Ig-like C2-type 5">
    <location>
        <begin position="413"/>
        <end position="507"/>
    </location>
</feature>
<feature type="domain" description="Protein kinase" evidence="6">
    <location>
        <begin position="585"/>
        <end position="933"/>
    </location>
</feature>
<feature type="region of interest" description="Important for interaction with phosphotyrosine-binding proteins" evidence="1">
    <location>
        <begin position="564"/>
        <end position="566"/>
    </location>
</feature>
<feature type="active site" description="Proton acceptor" evidence="6 7">
    <location>
        <position position="788"/>
    </location>
</feature>
<feature type="binding site" evidence="1">
    <location>
        <position position="564"/>
    </location>
    <ligand>
        <name>Mg(2+)</name>
        <dbReference type="ChEBI" id="CHEBI:18420"/>
    </ligand>
</feature>
<feature type="binding site" evidence="6">
    <location>
        <begin position="592"/>
        <end position="599"/>
    </location>
    <ligand>
        <name>ATP</name>
        <dbReference type="ChEBI" id="CHEBI:30616"/>
    </ligand>
</feature>
<feature type="binding site" evidence="6">
    <location>
        <position position="619"/>
    </location>
    <ligand>
        <name>ATP</name>
        <dbReference type="ChEBI" id="CHEBI:30616"/>
    </ligand>
</feature>
<feature type="binding site" evidence="6">
    <location>
        <begin position="667"/>
        <end position="673"/>
    </location>
    <ligand>
        <name>ATP</name>
        <dbReference type="ChEBI" id="CHEBI:30616"/>
    </ligand>
</feature>
<feature type="binding site" evidence="6">
    <location>
        <position position="792"/>
    </location>
    <ligand>
        <name>ATP</name>
        <dbReference type="ChEBI" id="CHEBI:30616"/>
    </ligand>
</feature>
<feature type="binding site" evidence="1">
    <location>
        <position position="793"/>
    </location>
    <ligand>
        <name>Mg(2+)</name>
        <dbReference type="ChEBI" id="CHEBI:18420"/>
    </ligand>
</feature>
<feature type="binding site" evidence="1">
    <location>
        <position position="806"/>
    </location>
    <ligand>
        <name>Mg(2+)</name>
        <dbReference type="ChEBI" id="CHEBI:18420"/>
    </ligand>
</feature>
<feature type="site" description="Interaction with SH2B2/APS" evidence="1">
    <location>
        <position position="564"/>
    </location>
</feature>
<feature type="site" description="Important for interaction with phosphotyrosine-binding proteins" evidence="1">
    <location>
        <position position="932"/>
    </location>
</feature>
<feature type="site" description="Interaction with SH2B2/APS" evidence="1">
    <location>
        <position position="932"/>
    </location>
</feature>
<feature type="modified residue" description="Phosphotyrosine; by autocatalysis" evidence="3">
    <location>
        <position position="543"/>
    </location>
</feature>
<feature type="modified residue" description="Phosphotyrosine; by autocatalysis" evidence="3">
    <location>
        <position position="549"/>
    </location>
</feature>
<feature type="modified residue" description="Phosphotyrosine; by autocatalysis" evidence="3">
    <location>
        <position position="564"/>
    </location>
</feature>
<feature type="modified residue" description="Phosphotyrosine; by autocatalysis" evidence="3">
    <location>
        <position position="566"/>
    </location>
</feature>
<feature type="modified residue" description="Phosphotyrosine; by autocatalysis" evidence="3">
    <location>
        <position position="699"/>
    </location>
</feature>
<feature type="modified residue" description="Phosphotyrosine; by autocatalysis" evidence="3">
    <location>
        <position position="717"/>
    </location>
</feature>
<feature type="modified residue" description="Phosphotyrosine; by autocatalysis" evidence="3">
    <location>
        <position position="726"/>
    </location>
</feature>
<feature type="modified residue" description="Phosphoserine; by PKC/PRKCA" evidence="3">
    <location>
        <position position="737"/>
    </location>
</feature>
<feature type="modified residue" description="Phosphoserine; by PKC/PRKCA" evidence="3">
    <location>
        <position position="742"/>
    </location>
</feature>
<feature type="modified residue" description="Phosphoserine" evidence="3">
    <location>
        <position position="817"/>
    </location>
</feature>
<feature type="modified residue" description="Phosphotyrosine; by autocatalysis" evidence="3">
    <location>
        <position position="819"/>
    </location>
</feature>
<feature type="modified residue" description="Phosphoserine" evidence="3">
    <location>
        <position position="887"/>
    </location>
</feature>
<feature type="modified residue" description="Phosphotyrosine; by autocatalysis" evidence="3">
    <location>
        <position position="896"/>
    </location>
</feature>
<feature type="modified residue" description="Phosphotyrosine; by autocatalysis" evidence="3">
    <location>
        <position position="932"/>
    </location>
</feature>
<feature type="modified residue" description="Phosphoserine" evidence="3">
    <location>
        <position position="955"/>
    </location>
</feature>
<feature type="glycosylation site" description="N-linked (GlcNAc...) asparagine" evidence="4">
    <location>
        <position position="94"/>
    </location>
</feature>
<feature type="glycosylation site" description="N-linked (GlcNAc...) asparagine" evidence="4">
    <location>
        <position position="145"/>
    </location>
</feature>
<feature type="glycosylation site" description="N-linked (GlcNAc...) asparagine" evidence="4">
    <location>
        <position position="283"/>
    </location>
</feature>
<feature type="glycosylation site" description="N-linked (GlcNAc...) asparagine" evidence="4">
    <location>
        <position position="293"/>
    </location>
</feature>
<feature type="glycosylation site" description="N-linked (GlcNAc...) asparagine" evidence="4">
    <location>
        <position position="300"/>
    </location>
</feature>
<feature type="glycosylation site" description="N-linked (GlcNAc...) asparagine" evidence="4">
    <location>
        <position position="320"/>
    </location>
</feature>
<feature type="glycosylation site" description="N-linked (GlcNAc...) asparagine" evidence="4">
    <location>
        <position position="352"/>
    </location>
</feature>
<feature type="glycosylation site" description="N-linked (GlcNAc...) asparagine" evidence="4">
    <location>
        <position position="367"/>
    </location>
</feature>
<feature type="glycosylation site" description="N-linked (GlcNAc...) asparagine" evidence="4">
    <location>
        <position position="400"/>
    </location>
</feature>
<feature type="glycosylation site" description="N-linked (GlcNAc...) asparagine" evidence="4">
    <location>
        <position position="463"/>
    </location>
</feature>
<feature type="glycosylation site" description="N-linked (GlcNAc...) asparagine" evidence="4">
    <location>
        <position position="486"/>
    </location>
</feature>
<feature type="disulfide bond" evidence="5">
    <location>
        <begin position="58"/>
        <end position="97"/>
    </location>
</feature>
<feature type="disulfide bond" evidence="5">
    <location>
        <begin position="136"/>
        <end position="186"/>
    </location>
</feature>
<feature type="disulfide bond" evidence="5">
    <location>
        <begin position="151"/>
        <end position="183"/>
    </location>
</feature>
<feature type="disulfide bond" evidence="5">
    <location>
        <begin position="233"/>
        <end position="290"/>
    </location>
</feature>
<feature type="disulfide bond" evidence="5">
    <location>
        <begin position="428"/>
        <end position="491"/>
    </location>
</feature>